<accession>P83353</accession>
<sequence>GIFPYNVPEGQHDPAYLQALQQQALHYINLQQVPDLQLHRARELEVIAKNPTAYHPGYNYAGHYYPGNYYSGYYHPGHYYTALHHNAALHQHSLNEQKVINEQKALIAGQ</sequence>
<keyword id="KW-0193">Cuticle</keyword>
<keyword id="KW-0903">Direct protein sequencing</keyword>
<reference key="1">
    <citation type="journal article" date="2003" name="Comp. Biochem. Physiol.">
        <title>Cuticular proteins from the horseshoe crab, Limulus polyphemus.</title>
        <authorList>
            <person name="Ditzel N."/>
            <person name="Andersen S.O."/>
            <person name="Hoejrup P."/>
        </authorList>
    </citation>
    <scope>PROTEIN SEQUENCE</scope>
    <scope>MASS SPECTROMETRY</scope>
    <source>
        <tissue>Carapace cuticle</tissue>
    </source>
</reference>
<feature type="chain" id="PRO_0000196177" description="Cuticle protein 13">
    <location>
        <begin position="1"/>
        <end position="110"/>
    </location>
</feature>
<name>CU13_LIMPO</name>
<protein>
    <recommendedName>
        <fullName>Cuticle protein 13</fullName>
    </recommendedName>
    <alternativeName>
        <fullName>LpCP13</fullName>
    </alternativeName>
</protein>
<proteinExistence type="evidence at protein level"/>
<organism evidence="2">
    <name type="scientific">Limulus polyphemus</name>
    <name type="common">Atlantic horseshoe crab</name>
    <dbReference type="NCBI Taxonomy" id="6850"/>
    <lineage>
        <taxon>Eukaryota</taxon>
        <taxon>Metazoa</taxon>
        <taxon>Ecdysozoa</taxon>
        <taxon>Arthropoda</taxon>
        <taxon>Chelicerata</taxon>
        <taxon>Merostomata</taxon>
        <taxon>Xiphosura</taxon>
        <taxon>Limulidae</taxon>
        <taxon>Limulus</taxon>
    </lineage>
</organism>
<comment type="mass spectrometry"/>
<dbReference type="SMR" id="P83353"/>
<dbReference type="EnsemblMetazoa" id="XM_013933658.2">
    <property type="protein sequence ID" value="XP_013789112.1"/>
    <property type="gene ID" value="LOC106472985"/>
</dbReference>
<dbReference type="Proteomes" id="UP000694941">
    <property type="component" value="Unplaced"/>
</dbReference>
<dbReference type="GO" id="GO:0042302">
    <property type="term" value="F:structural constituent of cuticle"/>
    <property type="evidence" value="ECO:0007669"/>
    <property type="project" value="UniProtKB-KW"/>
</dbReference>
<evidence type="ECO:0000269" key="1">
    <source>
    </source>
</evidence>
<evidence type="ECO:0000305" key="2"/>